<proteinExistence type="evidence at protein level"/>
<protein>
    <recommendedName>
        <fullName>Coiled-coil-helix-coiled-coil-helix domain-containing protein 5</fullName>
    </recommendedName>
</protein>
<dbReference type="EMBL" id="AK096990">
    <property type="protein sequence ID" value="BAC04922.1"/>
    <property type="molecule type" value="mRNA"/>
</dbReference>
<dbReference type="EMBL" id="AC012442">
    <property type="protein sequence ID" value="AAX82000.1"/>
    <property type="molecule type" value="Genomic_DNA"/>
</dbReference>
<dbReference type="EMBL" id="CH471217">
    <property type="protein sequence ID" value="EAW73594.1"/>
    <property type="molecule type" value="Genomic_DNA"/>
</dbReference>
<dbReference type="EMBL" id="BC004498">
    <property type="protein sequence ID" value="AAH04498.1"/>
    <property type="molecule type" value="mRNA"/>
</dbReference>
<dbReference type="CCDS" id="CCDS2098.1">
    <molecule id="Q9BSY4-1"/>
</dbReference>
<dbReference type="RefSeq" id="NP_115685.1">
    <molecule id="Q9BSY4-1"/>
    <property type="nucleotide sequence ID" value="NM_032309.4"/>
</dbReference>
<dbReference type="RefSeq" id="XP_005263881.1">
    <molecule id="Q9BSY4-2"/>
    <property type="nucleotide sequence ID" value="XM_005263824.5"/>
</dbReference>
<dbReference type="RefSeq" id="XP_054200150.1">
    <molecule id="Q9BSY4-2"/>
    <property type="nucleotide sequence ID" value="XM_054344175.1"/>
</dbReference>
<dbReference type="PDB" id="2LQL">
    <property type="method" value="NMR"/>
    <property type="chains" value="A=1-110"/>
</dbReference>
<dbReference type="PDBsum" id="2LQL"/>
<dbReference type="BMRB" id="Q9BSY4"/>
<dbReference type="SMR" id="Q9BSY4"/>
<dbReference type="BioGRID" id="123996">
    <property type="interactions" value="12"/>
</dbReference>
<dbReference type="FunCoup" id="Q9BSY4">
    <property type="interactions" value="800"/>
</dbReference>
<dbReference type="IntAct" id="Q9BSY4">
    <property type="interactions" value="14"/>
</dbReference>
<dbReference type="MINT" id="Q9BSY4"/>
<dbReference type="STRING" id="9606.ENSP00000325655"/>
<dbReference type="iPTMnet" id="Q9BSY4"/>
<dbReference type="PhosphoSitePlus" id="Q9BSY4"/>
<dbReference type="BioMuta" id="CHCHD5"/>
<dbReference type="DMDM" id="62510506"/>
<dbReference type="jPOST" id="Q9BSY4"/>
<dbReference type="MassIVE" id="Q9BSY4"/>
<dbReference type="PaxDb" id="9606-ENSP00000325655"/>
<dbReference type="PeptideAtlas" id="Q9BSY4"/>
<dbReference type="ProteomicsDB" id="72400"/>
<dbReference type="ProteomicsDB" id="78933">
    <molecule id="Q9BSY4-1"/>
</dbReference>
<dbReference type="Pumba" id="Q9BSY4"/>
<dbReference type="TopDownProteomics" id="Q9BSY4-1">
    <molecule id="Q9BSY4-1"/>
</dbReference>
<dbReference type="Antibodypedia" id="47917">
    <property type="antibodies" value="221 antibodies from 13 providers"/>
</dbReference>
<dbReference type="DNASU" id="84269"/>
<dbReference type="Ensembl" id="ENST00000324913.10">
    <molecule id="Q9BSY4-1"/>
    <property type="protein sequence ID" value="ENSP00000325655.5"/>
    <property type="gene ID" value="ENSG00000125611.16"/>
</dbReference>
<dbReference type="Ensembl" id="ENST00000409719.1">
    <molecule id="Q9BSY4-2"/>
    <property type="protein sequence ID" value="ENSP00000386994.1"/>
    <property type="gene ID" value="ENSG00000125611.16"/>
</dbReference>
<dbReference type="GeneID" id="84269"/>
<dbReference type="KEGG" id="hsa:84269"/>
<dbReference type="MANE-Select" id="ENST00000324913.10">
    <property type="protein sequence ID" value="ENSP00000325655.5"/>
    <property type="RefSeq nucleotide sequence ID" value="NM_032309.4"/>
    <property type="RefSeq protein sequence ID" value="NP_115685.1"/>
</dbReference>
<dbReference type="UCSC" id="uc002thz.2">
    <molecule id="Q9BSY4-1"/>
    <property type="organism name" value="human"/>
</dbReference>
<dbReference type="AGR" id="HGNC:17840"/>
<dbReference type="CTD" id="84269"/>
<dbReference type="DisGeNET" id="84269"/>
<dbReference type="GeneCards" id="CHCHD5"/>
<dbReference type="HGNC" id="HGNC:17840">
    <property type="gene designation" value="CHCHD5"/>
</dbReference>
<dbReference type="HPA" id="ENSG00000125611">
    <property type="expression patterns" value="Low tissue specificity"/>
</dbReference>
<dbReference type="MIM" id="616978">
    <property type="type" value="gene"/>
</dbReference>
<dbReference type="neXtProt" id="NX_Q9BSY4"/>
<dbReference type="PharmGKB" id="PA25896"/>
<dbReference type="VEuPathDB" id="HostDB:ENSG00000125611"/>
<dbReference type="eggNOG" id="ENOG502S5BR">
    <property type="taxonomic scope" value="Eukaryota"/>
</dbReference>
<dbReference type="GeneTree" id="ENSGT00390000007919"/>
<dbReference type="HOGENOM" id="CLU_165152_0_0_1"/>
<dbReference type="InParanoid" id="Q9BSY4"/>
<dbReference type="OMA" id="QKIRRDC"/>
<dbReference type="OrthoDB" id="2581252at2759"/>
<dbReference type="PAN-GO" id="Q9BSY4">
    <property type="GO annotations" value="2 GO annotations based on evolutionary models"/>
</dbReference>
<dbReference type="PhylomeDB" id="Q9BSY4"/>
<dbReference type="TreeFam" id="TF333181"/>
<dbReference type="PathwayCommons" id="Q9BSY4"/>
<dbReference type="Reactome" id="R-HSA-1268020">
    <property type="pathway name" value="Mitochondrial protein import"/>
</dbReference>
<dbReference type="SignaLink" id="Q9BSY4"/>
<dbReference type="BioGRID-ORCS" id="84269">
    <property type="hits" value="24 hits in 1156 CRISPR screens"/>
</dbReference>
<dbReference type="EvolutionaryTrace" id="Q9BSY4"/>
<dbReference type="GenomeRNAi" id="84269"/>
<dbReference type="Pharos" id="Q9BSY4">
    <property type="development level" value="Tbio"/>
</dbReference>
<dbReference type="PRO" id="PR:Q9BSY4"/>
<dbReference type="Proteomes" id="UP000005640">
    <property type="component" value="Chromosome 2"/>
</dbReference>
<dbReference type="RNAct" id="Q9BSY4">
    <property type="molecule type" value="protein"/>
</dbReference>
<dbReference type="Bgee" id="ENSG00000125611">
    <property type="expression patterns" value="Expressed in left testis and 131 other cell types or tissues"/>
</dbReference>
<dbReference type="ExpressionAtlas" id="Q9BSY4">
    <property type="expression patterns" value="baseline and differential"/>
</dbReference>
<dbReference type="GO" id="GO:0005758">
    <property type="term" value="C:mitochondrial intermembrane space"/>
    <property type="evidence" value="ECO:0000318"/>
    <property type="project" value="GO_Central"/>
</dbReference>
<dbReference type="GO" id="GO:0005739">
    <property type="term" value="C:mitochondrion"/>
    <property type="evidence" value="ECO:0006056"/>
    <property type="project" value="FlyBase"/>
</dbReference>
<dbReference type="GO" id="GO:0045333">
    <property type="term" value="P:cellular respiration"/>
    <property type="evidence" value="ECO:0000318"/>
    <property type="project" value="GO_Central"/>
</dbReference>
<dbReference type="DisProt" id="DP00757"/>
<dbReference type="Gene3D" id="1.10.287.2900">
    <property type="match status" value="2"/>
</dbReference>
<dbReference type="InterPro" id="IPR010625">
    <property type="entry name" value="CHCH"/>
</dbReference>
<dbReference type="InterPro" id="IPR052848">
    <property type="entry name" value="CHCH_domain-containing_protein"/>
</dbReference>
<dbReference type="InterPro" id="IPR031731">
    <property type="entry name" value="CX9C"/>
</dbReference>
<dbReference type="PANTHER" id="PTHR47106">
    <property type="entry name" value="COILED-COIL-HELIX-COILED-COIL-HELIX DOMAIN-CONTAINING PROTEIN 5"/>
    <property type="match status" value="1"/>
</dbReference>
<dbReference type="PANTHER" id="PTHR47106:SF1">
    <property type="entry name" value="COILED-COIL-HELIX-COILED-COIL-HELIX DOMAIN-CONTAINING PROTEIN 5"/>
    <property type="match status" value="1"/>
</dbReference>
<dbReference type="Pfam" id="PF06747">
    <property type="entry name" value="CHCH"/>
    <property type="match status" value="1"/>
</dbReference>
<dbReference type="Pfam" id="PF16860">
    <property type="entry name" value="CX9C"/>
    <property type="match status" value="1"/>
</dbReference>
<dbReference type="PROSITE" id="PS51808">
    <property type="entry name" value="CHCH"/>
    <property type="match status" value="2"/>
</dbReference>
<keyword id="KW-0002">3D-structure</keyword>
<keyword id="KW-0007">Acetylation</keyword>
<keyword id="KW-0025">Alternative splicing</keyword>
<keyword id="KW-1015">Disulfide bond</keyword>
<keyword id="KW-0496">Mitochondrion</keyword>
<keyword id="KW-1267">Proteomics identification</keyword>
<keyword id="KW-1185">Reference proteome</keyword>
<organism>
    <name type="scientific">Homo sapiens</name>
    <name type="common">Human</name>
    <dbReference type="NCBI Taxonomy" id="9606"/>
    <lineage>
        <taxon>Eukaryota</taxon>
        <taxon>Metazoa</taxon>
        <taxon>Chordata</taxon>
        <taxon>Craniata</taxon>
        <taxon>Vertebrata</taxon>
        <taxon>Euteleostomi</taxon>
        <taxon>Mammalia</taxon>
        <taxon>Eutheria</taxon>
        <taxon>Euarchontoglires</taxon>
        <taxon>Primates</taxon>
        <taxon>Haplorrhini</taxon>
        <taxon>Catarrhini</taxon>
        <taxon>Hominidae</taxon>
        <taxon>Homo</taxon>
    </lineage>
</organism>
<reference key="1">
    <citation type="journal article" date="2004" name="Nat. Genet.">
        <title>Complete sequencing and characterization of 21,243 full-length human cDNAs.</title>
        <authorList>
            <person name="Ota T."/>
            <person name="Suzuki Y."/>
            <person name="Nishikawa T."/>
            <person name="Otsuki T."/>
            <person name="Sugiyama T."/>
            <person name="Irie R."/>
            <person name="Wakamatsu A."/>
            <person name="Hayashi K."/>
            <person name="Sato H."/>
            <person name="Nagai K."/>
            <person name="Kimura K."/>
            <person name="Makita H."/>
            <person name="Sekine M."/>
            <person name="Obayashi M."/>
            <person name="Nishi T."/>
            <person name="Shibahara T."/>
            <person name="Tanaka T."/>
            <person name="Ishii S."/>
            <person name="Yamamoto J."/>
            <person name="Saito K."/>
            <person name="Kawai Y."/>
            <person name="Isono Y."/>
            <person name="Nakamura Y."/>
            <person name="Nagahari K."/>
            <person name="Murakami K."/>
            <person name="Yasuda T."/>
            <person name="Iwayanagi T."/>
            <person name="Wagatsuma M."/>
            <person name="Shiratori A."/>
            <person name="Sudo H."/>
            <person name="Hosoiri T."/>
            <person name="Kaku Y."/>
            <person name="Kodaira H."/>
            <person name="Kondo H."/>
            <person name="Sugawara M."/>
            <person name="Takahashi M."/>
            <person name="Kanda K."/>
            <person name="Yokoi T."/>
            <person name="Furuya T."/>
            <person name="Kikkawa E."/>
            <person name="Omura Y."/>
            <person name="Abe K."/>
            <person name="Kamihara K."/>
            <person name="Katsuta N."/>
            <person name="Sato K."/>
            <person name="Tanikawa M."/>
            <person name="Yamazaki M."/>
            <person name="Ninomiya K."/>
            <person name="Ishibashi T."/>
            <person name="Yamashita H."/>
            <person name="Murakawa K."/>
            <person name="Fujimori K."/>
            <person name="Tanai H."/>
            <person name="Kimata M."/>
            <person name="Watanabe M."/>
            <person name="Hiraoka S."/>
            <person name="Chiba Y."/>
            <person name="Ishida S."/>
            <person name="Ono Y."/>
            <person name="Takiguchi S."/>
            <person name="Watanabe S."/>
            <person name="Yosida M."/>
            <person name="Hotuta T."/>
            <person name="Kusano J."/>
            <person name="Kanehori K."/>
            <person name="Takahashi-Fujii A."/>
            <person name="Hara H."/>
            <person name="Tanase T.-O."/>
            <person name="Nomura Y."/>
            <person name="Togiya S."/>
            <person name="Komai F."/>
            <person name="Hara R."/>
            <person name="Takeuchi K."/>
            <person name="Arita M."/>
            <person name="Imose N."/>
            <person name="Musashino K."/>
            <person name="Yuuki H."/>
            <person name="Oshima A."/>
            <person name="Sasaki N."/>
            <person name="Aotsuka S."/>
            <person name="Yoshikawa Y."/>
            <person name="Matsunawa H."/>
            <person name="Ichihara T."/>
            <person name="Shiohata N."/>
            <person name="Sano S."/>
            <person name="Moriya S."/>
            <person name="Momiyama H."/>
            <person name="Satoh N."/>
            <person name="Takami S."/>
            <person name="Terashima Y."/>
            <person name="Suzuki O."/>
            <person name="Nakagawa S."/>
            <person name="Senoh A."/>
            <person name="Mizoguchi H."/>
            <person name="Goto Y."/>
            <person name="Shimizu F."/>
            <person name="Wakebe H."/>
            <person name="Hishigaki H."/>
            <person name="Watanabe T."/>
            <person name="Sugiyama A."/>
            <person name="Takemoto M."/>
            <person name="Kawakami B."/>
            <person name="Yamazaki M."/>
            <person name="Watanabe K."/>
            <person name="Kumagai A."/>
            <person name="Itakura S."/>
            <person name="Fukuzumi Y."/>
            <person name="Fujimori Y."/>
            <person name="Komiyama M."/>
            <person name="Tashiro H."/>
            <person name="Tanigami A."/>
            <person name="Fujiwara T."/>
            <person name="Ono T."/>
            <person name="Yamada K."/>
            <person name="Fujii Y."/>
            <person name="Ozaki K."/>
            <person name="Hirao M."/>
            <person name="Ohmori Y."/>
            <person name="Kawabata A."/>
            <person name="Hikiji T."/>
            <person name="Kobatake N."/>
            <person name="Inagaki H."/>
            <person name="Ikema Y."/>
            <person name="Okamoto S."/>
            <person name="Okitani R."/>
            <person name="Kawakami T."/>
            <person name="Noguchi S."/>
            <person name="Itoh T."/>
            <person name="Shigeta K."/>
            <person name="Senba T."/>
            <person name="Matsumura K."/>
            <person name="Nakajima Y."/>
            <person name="Mizuno T."/>
            <person name="Morinaga M."/>
            <person name="Sasaki M."/>
            <person name="Togashi T."/>
            <person name="Oyama M."/>
            <person name="Hata H."/>
            <person name="Watanabe M."/>
            <person name="Komatsu T."/>
            <person name="Mizushima-Sugano J."/>
            <person name="Satoh T."/>
            <person name="Shirai Y."/>
            <person name="Takahashi Y."/>
            <person name="Nakagawa K."/>
            <person name="Okumura K."/>
            <person name="Nagase T."/>
            <person name="Nomura N."/>
            <person name="Kikuchi H."/>
            <person name="Masuho Y."/>
            <person name="Yamashita R."/>
            <person name="Nakai K."/>
            <person name="Yada T."/>
            <person name="Nakamura Y."/>
            <person name="Ohara O."/>
            <person name="Isogai T."/>
            <person name="Sugano S."/>
        </authorList>
    </citation>
    <scope>NUCLEOTIDE SEQUENCE [LARGE SCALE MRNA] (ISOFORM 2)</scope>
    <source>
        <tissue>Small intestine</tissue>
    </source>
</reference>
<reference key="2">
    <citation type="journal article" date="2005" name="Nature">
        <title>Generation and annotation of the DNA sequences of human chromosomes 2 and 4.</title>
        <authorList>
            <person name="Hillier L.W."/>
            <person name="Graves T.A."/>
            <person name="Fulton R.S."/>
            <person name="Fulton L.A."/>
            <person name="Pepin K.H."/>
            <person name="Minx P."/>
            <person name="Wagner-McPherson C."/>
            <person name="Layman D."/>
            <person name="Wylie K."/>
            <person name="Sekhon M."/>
            <person name="Becker M.C."/>
            <person name="Fewell G.A."/>
            <person name="Delehaunty K.D."/>
            <person name="Miner T.L."/>
            <person name="Nash W.E."/>
            <person name="Kremitzki C."/>
            <person name="Oddy L."/>
            <person name="Du H."/>
            <person name="Sun H."/>
            <person name="Bradshaw-Cordum H."/>
            <person name="Ali J."/>
            <person name="Carter J."/>
            <person name="Cordes M."/>
            <person name="Harris A."/>
            <person name="Isak A."/>
            <person name="van Brunt A."/>
            <person name="Nguyen C."/>
            <person name="Du F."/>
            <person name="Courtney L."/>
            <person name="Kalicki J."/>
            <person name="Ozersky P."/>
            <person name="Abbott S."/>
            <person name="Armstrong J."/>
            <person name="Belter E.A."/>
            <person name="Caruso L."/>
            <person name="Cedroni M."/>
            <person name="Cotton M."/>
            <person name="Davidson T."/>
            <person name="Desai A."/>
            <person name="Elliott G."/>
            <person name="Erb T."/>
            <person name="Fronick C."/>
            <person name="Gaige T."/>
            <person name="Haakenson W."/>
            <person name="Haglund K."/>
            <person name="Holmes A."/>
            <person name="Harkins R."/>
            <person name="Kim K."/>
            <person name="Kruchowski S.S."/>
            <person name="Strong C.M."/>
            <person name="Grewal N."/>
            <person name="Goyea E."/>
            <person name="Hou S."/>
            <person name="Levy A."/>
            <person name="Martinka S."/>
            <person name="Mead K."/>
            <person name="McLellan M.D."/>
            <person name="Meyer R."/>
            <person name="Randall-Maher J."/>
            <person name="Tomlinson C."/>
            <person name="Dauphin-Kohlberg S."/>
            <person name="Kozlowicz-Reilly A."/>
            <person name="Shah N."/>
            <person name="Swearengen-Shahid S."/>
            <person name="Snider J."/>
            <person name="Strong J.T."/>
            <person name="Thompson J."/>
            <person name="Yoakum M."/>
            <person name="Leonard S."/>
            <person name="Pearman C."/>
            <person name="Trani L."/>
            <person name="Radionenko M."/>
            <person name="Waligorski J.E."/>
            <person name="Wang C."/>
            <person name="Rock S.M."/>
            <person name="Tin-Wollam A.-M."/>
            <person name="Maupin R."/>
            <person name="Latreille P."/>
            <person name="Wendl M.C."/>
            <person name="Yang S.-P."/>
            <person name="Pohl C."/>
            <person name="Wallis J.W."/>
            <person name="Spieth J."/>
            <person name="Bieri T.A."/>
            <person name="Berkowicz N."/>
            <person name="Nelson J.O."/>
            <person name="Osborne J."/>
            <person name="Ding L."/>
            <person name="Meyer R."/>
            <person name="Sabo A."/>
            <person name="Shotland Y."/>
            <person name="Sinha P."/>
            <person name="Wohldmann P.E."/>
            <person name="Cook L.L."/>
            <person name="Hickenbotham M.T."/>
            <person name="Eldred J."/>
            <person name="Williams D."/>
            <person name="Jones T.A."/>
            <person name="She X."/>
            <person name="Ciccarelli F.D."/>
            <person name="Izaurralde E."/>
            <person name="Taylor J."/>
            <person name="Schmutz J."/>
            <person name="Myers R.M."/>
            <person name="Cox D.R."/>
            <person name="Huang X."/>
            <person name="McPherson J.D."/>
            <person name="Mardis E.R."/>
            <person name="Clifton S.W."/>
            <person name="Warren W.C."/>
            <person name="Chinwalla A.T."/>
            <person name="Eddy S.R."/>
            <person name="Marra M.A."/>
            <person name="Ovcharenko I."/>
            <person name="Furey T.S."/>
            <person name="Miller W."/>
            <person name="Eichler E.E."/>
            <person name="Bork P."/>
            <person name="Suyama M."/>
            <person name="Torrents D."/>
            <person name="Waterston R.H."/>
            <person name="Wilson R.K."/>
        </authorList>
    </citation>
    <scope>NUCLEOTIDE SEQUENCE [LARGE SCALE GENOMIC DNA]</scope>
</reference>
<reference key="3">
    <citation type="submission" date="2005-07" db="EMBL/GenBank/DDBJ databases">
        <authorList>
            <person name="Mural R.J."/>
            <person name="Istrail S."/>
            <person name="Sutton G."/>
            <person name="Florea L."/>
            <person name="Halpern A.L."/>
            <person name="Mobarry C.M."/>
            <person name="Lippert R."/>
            <person name="Walenz B."/>
            <person name="Shatkay H."/>
            <person name="Dew I."/>
            <person name="Miller J.R."/>
            <person name="Flanigan M.J."/>
            <person name="Edwards N.J."/>
            <person name="Bolanos R."/>
            <person name="Fasulo D."/>
            <person name="Halldorsson B.V."/>
            <person name="Hannenhalli S."/>
            <person name="Turner R."/>
            <person name="Yooseph S."/>
            <person name="Lu F."/>
            <person name="Nusskern D.R."/>
            <person name="Shue B.C."/>
            <person name="Zheng X.H."/>
            <person name="Zhong F."/>
            <person name="Delcher A.L."/>
            <person name="Huson D.H."/>
            <person name="Kravitz S.A."/>
            <person name="Mouchard L."/>
            <person name="Reinert K."/>
            <person name="Remington K.A."/>
            <person name="Clark A.G."/>
            <person name="Waterman M.S."/>
            <person name="Eichler E.E."/>
            <person name="Adams M.D."/>
            <person name="Hunkapiller M.W."/>
            <person name="Myers E.W."/>
            <person name="Venter J.C."/>
        </authorList>
    </citation>
    <scope>NUCLEOTIDE SEQUENCE [LARGE SCALE GENOMIC DNA]</scope>
</reference>
<reference key="4">
    <citation type="journal article" date="2004" name="Genome Res.">
        <title>The status, quality, and expansion of the NIH full-length cDNA project: the Mammalian Gene Collection (MGC).</title>
        <authorList>
            <consortium name="The MGC Project Team"/>
        </authorList>
    </citation>
    <scope>NUCLEOTIDE SEQUENCE [LARGE SCALE MRNA] (ISOFORM 1)</scope>
    <source>
        <tissue>Skin</tissue>
    </source>
</reference>
<reference key="5">
    <citation type="journal article" date="2012" name="Proc. Natl. Acad. Sci. U.S.A.">
        <title>N-terminal acetylome analyses and functional insights of the N-terminal acetyltransferase NatB.</title>
        <authorList>
            <person name="Van Damme P."/>
            <person name="Lasa M."/>
            <person name="Polevoda B."/>
            <person name="Gazquez C."/>
            <person name="Elosegui-Artola A."/>
            <person name="Kim D.S."/>
            <person name="De Juan-Pardo E."/>
            <person name="Demeyer K."/>
            <person name="Hole K."/>
            <person name="Larrea E."/>
            <person name="Timmerman E."/>
            <person name="Prieto J."/>
            <person name="Arnesen T."/>
            <person name="Sherman F."/>
            <person name="Gevaert K."/>
            <person name="Aldabe R."/>
        </authorList>
    </citation>
    <scope>ACETYLATION [LARGE SCALE ANALYSIS] AT MET-1</scope>
    <scope>IDENTIFICATION BY MASS SPECTROMETRY [LARGE SCALE ANALYSIS]</scope>
</reference>
<reference key="6">
    <citation type="journal article" date="2012" name="J. Struct. Biol.">
        <title>Structural characterization of CHCHD5 and CHCHD7: two atypical human twin CX9C proteins.</title>
        <authorList>
            <person name="Banci L."/>
            <person name="Bertini I."/>
            <person name="Ciofi-Baffoni S."/>
            <person name="Jaiswal D."/>
            <person name="Neri S."/>
            <person name="Peruzzini R."/>
            <person name="Winkelmann J."/>
        </authorList>
    </citation>
    <scope>STRUCTURE BY NMR</scope>
    <scope>SUBUNIT</scope>
    <scope>PUTATIVE SUBCELLULAR LOCATION</scope>
    <scope>IDENTIFICATION BY MASS SPECTROMETRY</scope>
    <scope>DISULFIDE BONDS</scope>
</reference>
<name>CHCH5_HUMAN</name>
<comment type="subunit">
    <text evidence="2">Monomer.</text>
</comment>
<comment type="interaction">
    <interactant intactId="EBI-11521409">
        <id>Q9BSY4</id>
    </interactant>
    <interactant intactId="EBI-10763431">
        <id>P53701</id>
        <label>HCCS</label>
    </interactant>
    <organismsDiffer>false</organismsDiffer>
    <experiments>2</experiments>
</comment>
<comment type="interaction">
    <interactant intactId="EBI-11521409">
        <id>Q9BSY4</id>
    </interactant>
    <interactant intactId="EBI-6509505">
        <id>Q0VD86</id>
        <label>INCA1</label>
    </interactant>
    <organismsDiffer>false</organismsDiffer>
    <experiments>3</experiments>
</comment>
<comment type="subcellular location">
    <subcellularLocation>
        <location evidence="4">Mitochondrion intermembrane space</location>
    </subcellularLocation>
</comment>
<comment type="alternative products">
    <event type="alternative splicing"/>
    <isoform>
        <id>Q9BSY4-1</id>
        <name>1</name>
        <sequence type="displayed"/>
    </isoform>
    <isoform>
        <id>Q9BSY4-2</id>
        <name>2</name>
        <sequence type="described" ref="VSP_056577"/>
    </isoform>
</comment>
<gene>
    <name type="primary">CHCHD5</name>
    <name type="synonym">C2orf9</name>
</gene>
<feature type="chain" id="PRO_0000129167" description="Coiled-coil-helix-coiled-coil-helix domain-containing protein 5">
    <location>
        <begin position="1"/>
        <end position="110"/>
    </location>
</feature>
<feature type="domain" description="CHCH 1" evidence="1">
    <location>
        <begin position="9"/>
        <end position="52"/>
    </location>
</feature>
<feature type="domain" description="CHCH 2" evidence="1">
    <location>
        <begin position="55"/>
        <end position="97"/>
    </location>
</feature>
<feature type="short sequence motif" description="Cx9C motif 1" evidence="1">
    <location>
        <begin position="12"/>
        <end position="22"/>
    </location>
</feature>
<feature type="short sequence motif" description="Cx9C motif 2" evidence="1">
    <location>
        <begin position="34"/>
        <end position="44"/>
    </location>
</feature>
<feature type="short sequence motif" description="Cx9C motif 3" evidence="1">
    <location>
        <begin position="58"/>
        <end position="68"/>
    </location>
</feature>
<feature type="short sequence motif" description="Cx9C motif 4" evidence="1">
    <location>
        <begin position="79"/>
        <end position="89"/>
    </location>
</feature>
<feature type="modified residue" description="N-acetylmethionine" evidence="5">
    <location>
        <position position="1"/>
    </location>
</feature>
<feature type="disulfide bond" evidence="1 2">
    <location>
        <begin position="12"/>
        <end position="44"/>
    </location>
</feature>
<feature type="disulfide bond" evidence="1 2">
    <location>
        <begin position="22"/>
        <end position="34"/>
    </location>
</feature>
<feature type="disulfide bond" evidence="1 2">
    <location>
        <begin position="58"/>
        <end position="89"/>
    </location>
</feature>
<feature type="disulfide bond" evidence="1 2">
    <location>
        <begin position="68"/>
        <end position="79"/>
    </location>
</feature>
<feature type="splice variant" id="VSP_056577" description="In isoform 2." evidence="3">
    <original>AQPLPAS</original>
    <variation>VRGAHLSSSLFSITSPSSFWLFRVKTLESSSAPPHHHTGLCHASRIQNIITSCPI</variation>
    <location>
        <begin position="104"/>
        <end position="110"/>
    </location>
</feature>
<feature type="helix" evidence="6">
    <location>
        <begin position="13"/>
        <end position="25"/>
    </location>
</feature>
<feature type="helix" evidence="6">
    <location>
        <begin position="29"/>
        <end position="32"/>
    </location>
</feature>
<feature type="helix" evidence="6">
    <location>
        <begin position="36"/>
        <end position="46"/>
    </location>
</feature>
<feature type="helix" evidence="6">
    <location>
        <begin position="52"/>
        <end position="57"/>
    </location>
</feature>
<feature type="helix" evidence="6">
    <location>
        <begin position="59"/>
        <end position="71"/>
    </location>
</feature>
<feature type="turn" evidence="6">
    <location>
        <begin position="76"/>
        <end position="78"/>
    </location>
</feature>
<feature type="helix" evidence="6">
    <location>
        <begin position="82"/>
        <end position="90"/>
    </location>
</feature>
<evidence type="ECO:0000255" key="1">
    <source>
        <dbReference type="PROSITE-ProRule" id="PRU01150"/>
    </source>
</evidence>
<evidence type="ECO:0000269" key="2">
    <source>
    </source>
</evidence>
<evidence type="ECO:0000303" key="3">
    <source>
    </source>
</evidence>
<evidence type="ECO:0000305" key="4"/>
<evidence type="ECO:0007744" key="5">
    <source>
    </source>
</evidence>
<evidence type="ECO:0007829" key="6">
    <source>
        <dbReference type="PDB" id="2LQL"/>
    </source>
</evidence>
<accession>Q9BSY4</accession>
<accession>Q585T4</accession>
<accession>Q8N8C4</accession>
<sequence>MQAALEVTARYCGRELEQYGQCVAAKPESWQRDCHYLKMSIAQCTSSHPIIRQIRQACAQPFEAFEECLRQNEAAVGNCAEHMRRFLQCAEQVQPPRSPATVEAQPLPAS</sequence>